<protein>
    <recommendedName>
        <fullName evidence="1">Diaminopimelate epimerase</fullName>
        <shortName evidence="1">DAP epimerase</shortName>
        <ecNumber evidence="1">5.1.1.7</ecNumber>
    </recommendedName>
    <alternativeName>
        <fullName evidence="1">PLP-independent amino acid racemase</fullName>
    </alternativeName>
</protein>
<dbReference type="EC" id="5.1.1.7" evidence="1"/>
<dbReference type="EMBL" id="CP000848">
    <property type="protein sequence ID" value="ABV76185.1"/>
    <property type="molecule type" value="Genomic_DNA"/>
</dbReference>
<dbReference type="RefSeq" id="WP_012150772.1">
    <property type="nucleotide sequence ID" value="NZ_CP121767.1"/>
</dbReference>
<dbReference type="SMR" id="A8GS10"/>
<dbReference type="GeneID" id="79937325"/>
<dbReference type="KEGG" id="rri:A1G_03270"/>
<dbReference type="HOGENOM" id="CLU_053306_1_0_5"/>
<dbReference type="UniPathway" id="UPA00034">
    <property type="reaction ID" value="UER00025"/>
</dbReference>
<dbReference type="Proteomes" id="UP000006832">
    <property type="component" value="Chromosome"/>
</dbReference>
<dbReference type="GO" id="GO:0005829">
    <property type="term" value="C:cytosol"/>
    <property type="evidence" value="ECO:0007669"/>
    <property type="project" value="TreeGrafter"/>
</dbReference>
<dbReference type="GO" id="GO:0008837">
    <property type="term" value="F:diaminopimelate epimerase activity"/>
    <property type="evidence" value="ECO:0007669"/>
    <property type="project" value="UniProtKB-UniRule"/>
</dbReference>
<dbReference type="GO" id="GO:0009089">
    <property type="term" value="P:lysine biosynthetic process via diaminopimelate"/>
    <property type="evidence" value="ECO:0007669"/>
    <property type="project" value="UniProtKB-UniRule"/>
</dbReference>
<dbReference type="Gene3D" id="3.10.310.10">
    <property type="entry name" value="Diaminopimelate Epimerase, Chain A, domain 1"/>
    <property type="match status" value="2"/>
</dbReference>
<dbReference type="HAMAP" id="MF_00197">
    <property type="entry name" value="DAP_epimerase"/>
    <property type="match status" value="1"/>
</dbReference>
<dbReference type="InterPro" id="IPR018510">
    <property type="entry name" value="DAP_epimerase_AS"/>
</dbReference>
<dbReference type="InterPro" id="IPR001653">
    <property type="entry name" value="DAP_epimerase_DapF"/>
</dbReference>
<dbReference type="NCBIfam" id="TIGR00652">
    <property type="entry name" value="DapF"/>
    <property type="match status" value="1"/>
</dbReference>
<dbReference type="PANTHER" id="PTHR31689:SF0">
    <property type="entry name" value="DIAMINOPIMELATE EPIMERASE"/>
    <property type="match status" value="1"/>
</dbReference>
<dbReference type="PANTHER" id="PTHR31689">
    <property type="entry name" value="DIAMINOPIMELATE EPIMERASE, CHLOROPLASTIC"/>
    <property type="match status" value="1"/>
</dbReference>
<dbReference type="Pfam" id="PF01678">
    <property type="entry name" value="DAP_epimerase"/>
    <property type="match status" value="2"/>
</dbReference>
<dbReference type="SUPFAM" id="SSF54506">
    <property type="entry name" value="Diaminopimelate epimerase-like"/>
    <property type="match status" value="2"/>
</dbReference>
<dbReference type="PROSITE" id="PS01326">
    <property type="entry name" value="DAP_EPIMERASE"/>
    <property type="match status" value="1"/>
</dbReference>
<reference key="1">
    <citation type="submission" date="2007-09" db="EMBL/GenBank/DDBJ databases">
        <title>Complete genome sequence of Rickettsia rickettsii.</title>
        <authorList>
            <person name="Madan A."/>
            <person name="Fahey J."/>
            <person name="Helton E."/>
            <person name="Ketteman M."/>
            <person name="Madan A."/>
            <person name="Rodrigues S."/>
            <person name="Sanchez A."/>
            <person name="Dasch G."/>
            <person name="Eremeeva M."/>
        </authorList>
    </citation>
    <scope>NUCLEOTIDE SEQUENCE [LARGE SCALE GENOMIC DNA]</scope>
    <source>
        <strain>Sheila Smith</strain>
    </source>
</reference>
<name>DAPF_RICRS</name>
<comment type="function">
    <text evidence="1">Catalyzes the stereoinversion of LL-2,6-diaminopimelate (L,L-DAP) to meso-diaminopimelate (meso-DAP), a precursor of L-lysine and an essential component of the bacterial peptidoglycan.</text>
</comment>
<comment type="catalytic activity">
    <reaction evidence="1">
        <text>(2S,6S)-2,6-diaminopimelate = meso-2,6-diaminopimelate</text>
        <dbReference type="Rhea" id="RHEA:15393"/>
        <dbReference type="ChEBI" id="CHEBI:57609"/>
        <dbReference type="ChEBI" id="CHEBI:57791"/>
        <dbReference type="EC" id="5.1.1.7"/>
    </reaction>
</comment>
<comment type="pathway">
    <text evidence="1">Amino-acid biosynthesis; L-lysine biosynthesis via DAP pathway; DL-2,6-diaminopimelate from LL-2,6-diaminopimelate: step 1/1.</text>
</comment>
<comment type="subunit">
    <text evidence="1">Homodimer.</text>
</comment>
<comment type="subcellular location">
    <subcellularLocation>
        <location evidence="1">Cytoplasm</location>
    </subcellularLocation>
</comment>
<comment type="similarity">
    <text evidence="1">Belongs to the diaminopimelate epimerase family.</text>
</comment>
<gene>
    <name evidence="1" type="primary">dapF</name>
    <name type="ordered locus">A1G_03270</name>
</gene>
<keyword id="KW-0028">Amino-acid biosynthesis</keyword>
<keyword id="KW-0963">Cytoplasm</keyword>
<keyword id="KW-0413">Isomerase</keyword>
<keyword id="KW-0457">Lysine biosynthesis</keyword>
<sequence>MISKINFVKMHGLGNDFVIVNKRDLSSSYDLSQLAKNMAERHTGIGCDQFILYEEHNDFYEMIIYNIDGSSAKLCGNATRCLAKLIYLDTGKQDITVMVGNKKLLCNVNDENNISVNVGSVSFNEAWMPSRDKVWEFAERYMIDLKETICVDIGNPHVVIFSKLEPQDQKIVGERLQAKELFADGVNVNFAEVKDNKIYLSVWERGVGLTLACGSGACGSFAAGLKHGFIHSPSTIVFKHGNLTMKEENGNIIMQGAATLVARGEYYCEQ</sequence>
<organism>
    <name type="scientific">Rickettsia rickettsii (strain Sheila Smith)</name>
    <dbReference type="NCBI Taxonomy" id="392021"/>
    <lineage>
        <taxon>Bacteria</taxon>
        <taxon>Pseudomonadati</taxon>
        <taxon>Pseudomonadota</taxon>
        <taxon>Alphaproteobacteria</taxon>
        <taxon>Rickettsiales</taxon>
        <taxon>Rickettsiaceae</taxon>
        <taxon>Rickettsieae</taxon>
        <taxon>Rickettsia</taxon>
        <taxon>spotted fever group</taxon>
    </lineage>
</organism>
<proteinExistence type="inferred from homology"/>
<feature type="chain" id="PRO_1000011955" description="Diaminopimelate epimerase">
    <location>
        <begin position="1"/>
        <end position="270"/>
    </location>
</feature>
<feature type="active site" description="Proton donor" evidence="1">
    <location>
        <position position="75"/>
    </location>
</feature>
<feature type="active site" description="Proton acceptor" evidence="1">
    <location>
        <position position="213"/>
    </location>
</feature>
<feature type="binding site" evidence="1">
    <location>
        <position position="15"/>
    </location>
    <ligand>
        <name>substrate</name>
    </ligand>
</feature>
<feature type="binding site" evidence="1">
    <location>
        <position position="49"/>
    </location>
    <ligand>
        <name>substrate</name>
    </ligand>
</feature>
<feature type="binding site" evidence="1">
    <location>
        <position position="66"/>
    </location>
    <ligand>
        <name>substrate</name>
    </ligand>
</feature>
<feature type="binding site" evidence="1">
    <location>
        <begin position="76"/>
        <end position="77"/>
    </location>
    <ligand>
        <name>substrate</name>
    </ligand>
</feature>
<feature type="binding site" evidence="1">
    <location>
        <position position="155"/>
    </location>
    <ligand>
        <name>substrate</name>
    </ligand>
</feature>
<feature type="binding site" evidence="1">
    <location>
        <position position="187"/>
    </location>
    <ligand>
        <name>substrate</name>
    </ligand>
</feature>
<feature type="binding site" evidence="1">
    <location>
        <begin position="204"/>
        <end position="205"/>
    </location>
    <ligand>
        <name>substrate</name>
    </ligand>
</feature>
<feature type="binding site" evidence="1">
    <location>
        <begin position="214"/>
        <end position="215"/>
    </location>
    <ligand>
        <name>substrate</name>
    </ligand>
</feature>
<feature type="site" description="Could be important to modulate the pK values of the two catalytic cysteine residues" evidence="1">
    <location>
        <position position="157"/>
    </location>
</feature>
<feature type="site" description="Could be important to modulate the pK values of the two catalytic cysteine residues" evidence="1">
    <location>
        <position position="204"/>
    </location>
</feature>
<accession>A8GS10</accession>
<evidence type="ECO:0000255" key="1">
    <source>
        <dbReference type="HAMAP-Rule" id="MF_00197"/>
    </source>
</evidence>